<sequence>MARVTSVTLGEHLTGFVGEMIQSGRYGNISEVLRDALRLMEAREQRVQHVRDMVLAGTNAPVSHRLMDEIFSAAVKDTSV</sequence>
<comment type="function">
    <text evidence="1">Antitoxin component of a type II toxin-antitoxin (TA) system. Neutralizes the effect of toxin ParE (By similarity).</text>
</comment>
<comment type="similarity">
    <text evidence="2">Belongs to the ParD antitoxin family.</text>
</comment>
<protein>
    <recommendedName>
        <fullName>Antitoxin ParD</fullName>
    </recommendedName>
</protein>
<accession>A1JUB1</accession>
<accession>O85269</accession>
<gene>
    <name type="primary">parD</name>
    <name type="ordered locus">YEP0058</name>
</gene>
<feature type="chain" id="PRO_0000281778" description="Antitoxin ParD">
    <location>
        <begin position="1"/>
        <end position="80"/>
    </location>
</feature>
<reference key="1">
    <citation type="journal article" date="2001" name="Infect. Immun.">
        <title>Complete DNA sequence of Yersinia enterocolitica serotype 0:8 low-calcium-response plasmid reveals a new virulence plasmid-associated replicon.</title>
        <authorList>
            <person name="Snellings N.J."/>
            <person name="Popek M."/>
            <person name="Lindler L.E."/>
        </authorList>
    </citation>
    <scope>NUCLEOTIDE SEQUENCE [GENOMIC DNA]</scope>
</reference>
<reference key="2">
    <citation type="journal article" date="2006" name="PLoS Genet.">
        <title>The complete genome sequence and comparative genome analysis of the high pathogenicity Yersinia enterocolitica strain 8081.</title>
        <authorList>
            <person name="Thomson N.R."/>
            <person name="Howard S."/>
            <person name="Wren B.W."/>
            <person name="Holden M.T.G."/>
            <person name="Crossman L."/>
            <person name="Challis G.L."/>
            <person name="Churcher C."/>
            <person name="Mungall K."/>
            <person name="Brooks K."/>
            <person name="Chillingworth T."/>
            <person name="Feltwell T."/>
            <person name="Abdellah Z."/>
            <person name="Hauser H."/>
            <person name="Jagels K."/>
            <person name="Maddison M."/>
            <person name="Moule S."/>
            <person name="Sanders M."/>
            <person name="Whitehead S."/>
            <person name="Quail M.A."/>
            <person name="Dougan G."/>
            <person name="Parkhill J."/>
            <person name="Prentice M.B."/>
        </authorList>
    </citation>
    <scope>NUCLEOTIDE SEQUENCE [LARGE SCALE GENOMIC DNA]</scope>
    <source>
        <strain>NCTC 13174 / 8081</strain>
    </source>
</reference>
<name>PARD_YERE8</name>
<keyword id="KW-0614">Plasmid</keyword>
<keyword id="KW-1277">Toxin-antitoxin system</keyword>
<dbReference type="EMBL" id="AF336309">
    <property type="protein sequence ID" value="AAK69262.1"/>
    <property type="molecule type" value="Genomic_DNA"/>
</dbReference>
<dbReference type="EMBL" id="AM286416">
    <property type="protein sequence ID" value="CAL10080.1"/>
    <property type="molecule type" value="Genomic_DNA"/>
</dbReference>
<dbReference type="RefSeq" id="NP_783708.1">
    <property type="nucleotide sequence ID" value="NC_004564.1"/>
</dbReference>
<dbReference type="RefSeq" id="NP_863552.1">
    <property type="nucleotide sequence ID" value="NC_005017.1"/>
</dbReference>
<dbReference type="RefSeq" id="WP_005176524.1">
    <property type="nucleotide sequence ID" value="NC_008791.1"/>
</dbReference>
<dbReference type="RefSeq" id="YP_001004107.1">
    <property type="nucleotide sequence ID" value="NC_008791.1"/>
</dbReference>
<dbReference type="SMR" id="A1JUB1"/>
<dbReference type="KEGG" id="yen:YEP0058"/>
<dbReference type="PATRIC" id="fig|393305.7.peg.58"/>
<dbReference type="eggNOG" id="COG3609">
    <property type="taxonomic scope" value="Bacteria"/>
</dbReference>
<dbReference type="HOGENOM" id="CLU_144805_2_1_6"/>
<dbReference type="OrthoDB" id="9815501at2"/>
<dbReference type="PRO" id="PR:A1JUB1"/>
<dbReference type="Proteomes" id="UP000000642">
    <property type="component" value="Plasmid pYVe8081"/>
</dbReference>
<dbReference type="GO" id="GO:0006355">
    <property type="term" value="P:regulation of DNA-templated transcription"/>
    <property type="evidence" value="ECO:0007669"/>
    <property type="project" value="InterPro"/>
</dbReference>
<dbReference type="CDD" id="cd22231">
    <property type="entry name" value="RHH_NikR_HicB-like"/>
    <property type="match status" value="1"/>
</dbReference>
<dbReference type="Gene3D" id="6.10.10.120">
    <property type="entry name" value="Antitoxin ParD1-like"/>
    <property type="match status" value="1"/>
</dbReference>
<dbReference type="InterPro" id="IPR022789">
    <property type="entry name" value="ParD"/>
</dbReference>
<dbReference type="InterPro" id="IPR038296">
    <property type="entry name" value="ParD_sf"/>
</dbReference>
<dbReference type="InterPro" id="IPR010985">
    <property type="entry name" value="Ribbon_hlx_hlx"/>
</dbReference>
<dbReference type="NCBIfam" id="TIGR02606">
    <property type="entry name" value="antidote_CC2985"/>
    <property type="match status" value="1"/>
</dbReference>
<dbReference type="PANTHER" id="PTHR36582">
    <property type="entry name" value="ANTITOXIN PARD"/>
    <property type="match status" value="1"/>
</dbReference>
<dbReference type="PANTHER" id="PTHR36582:SF2">
    <property type="entry name" value="ANTITOXIN PARD"/>
    <property type="match status" value="1"/>
</dbReference>
<dbReference type="Pfam" id="PF03693">
    <property type="entry name" value="ParD_antitoxin"/>
    <property type="match status" value="1"/>
</dbReference>
<dbReference type="SUPFAM" id="SSF47598">
    <property type="entry name" value="Ribbon-helix-helix"/>
    <property type="match status" value="1"/>
</dbReference>
<geneLocation type="plasmid">
    <name>pYVe8081</name>
</geneLocation>
<organism>
    <name type="scientific">Yersinia enterocolitica serotype O:8 / biotype 1B (strain NCTC 13174 / 8081)</name>
    <dbReference type="NCBI Taxonomy" id="393305"/>
    <lineage>
        <taxon>Bacteria</taxon>
        <taxon>Pseudomonadati</taxon>
        <taxon>Pseudomonadota</taxon>
        <taxon>Gammaproteobacteria</taxon>
        <taxon>Enterobacterales</taxon>
        <taxon>Yersiniaceae</taxon>
        <taxon>Yersinia</taxon>
    </lineage>
</organism>
<proteinExistence type="inferred from homology"/>
<evidence type="ECO:0000250" key="1"/>
<evidence type="ECO:0000305" key="2"/>